<keyword id="KW-0963">Cytoplasm</keyword>
<keyword id="KW-0227">DNA damage</keyword>
<keyword id="KW-0228">DNA excision</keyword>
<keyword id="KW-0234">DNA repair</keyword>
<keyword id="KW-0238">DNA-binding</keyword>
<keyword id="KW-0378">Hydrolase</keyword>
<evidence type="ECO:0000255" key="1">
    <source>
        <dbReference type="HAMAP-Rule" id="MF_01956"/>
    </source>
</evidence>
<reference key="1">
    <citation type="submission" date="2006-09" db="EMBL/GenBank/DDBJ databases">
        <authorList>
            <consortium name="The Klebsiella pneumonia Genome Sequencing Project"/>
            <person name="McClelland M."/>
            <person name="Sanderson E.K."/>
            <person name="Spieth J."/>
            <person name="Clifton W.S."/>
            <person name="Latreille P."/>
            <person name="Sabo A."/>
            <person name="Pepin K."/>
            <person name="Bhonagiri V."/>
            <person name="Porwollik S."/>
            <person name="Ali J."/>
            <person name="Wilson R.K."/>
        </authorList>
    </citation>
    <scope>NUCLEOTIDE SEQUENCE [LARGE SCALE GENOMIC DNA]</scope>
    <source>
        <strain>ATCC 700721 / MGH 78578</strain>
    </source>
</reference>
<gene>
    <name evidence="1" type="primary">mug</name>
    <name type="ordered locus">KPN78578_34100</name>
    <name type="ORF">KPN_03475</name>
</gene>
<protein>
    <recommendedName>
        <fullName evidence="1">G/U mismatch-specific DNA glycosylase</fullName>
        <ecNumber evidence="1">3.2.2.28</ecNumber>
    </recommendedName>
    <alternativeName>
        <fullName evidence="1">Double-strand-specific uracil glycosylase</fullName>
    </alternativeName>
    <alternativeName>
        <fullName evidence="1">Mismatch-specific uracil DNA-glycosylase</fullName>
        <shortName evidence="1">MUG</shortName>
    </alternativeName>
</protein>
<feature type="chain" id="PRO_1000070794" description="G/U mismatch-specific DNA glycosylase">
    <location>
        <begin position="1"/>
        <end position="168"/>
    </location>
</feature>
<dbReference type="EC" id="3.2.2.28" evidence="1"/>
<dbReference type="EMBL" id="CP000647">
    <property type="protein sequence ID" value="ABR78871.1"/>
    <property type="molecule type" value="Genomic_DNA"/>
</dbReference>
<dbReference type="RefSeq" id="WP_002917636.1">
    <property type="nucleotide sequence ID" value="NC_009648.1"/>
</dbReference>
<dbReference type="SMR" id="A6TE50"/>
<dbReference type="STRING" id="272620.KPN_03475"/>
<dbReference type="PaxDb" id="272620-KPN_03475"/>
<dbReference type="EnsemblBacteria" id="ABR78871">
    <property type="protein sequence ID" value="ABR78871"/>
    <property type="gene ID" value="KPN_03475"/>
</dbReference>
<dbReference type="GeneID" id="93250764"/>
<dbReference type="KEGG" id="kpn:KPN_03475"/>
<dbReference type="HOGENOM" id="CLU_042829_3_1_6"/>
<dbReference type="Proteomes" id="UP000000265">
    <property type="component" value="Chromosome"/>
</dbReference>
<dbReference type="GO" id="GO:0005737">
    <property type="term" value="C:cytoplasm"/>
    <property type="evidence" value="ECO:0007669"/>
    <property type="project" value="UniProtKB-SubCell"/>
</dbReference>
<dbReference type="GO" id="GO:0003677">
    <property type="term" value="F:DNA binding"/>
    <property type="evidence" value="ECO:0007669"/>
    <property type="project" value="UniProtKB-KW"/>
</dbReference>
<dbReference type="GO" id="GO:0008263">
    <property type="term" value="F:pyrimidine-specific mismatch base pair DNA N-glycosylase activity"/>
    <property type="evidence" value="ECO:0007669"/>
    <property type="project" value="UniProtKB-UniRule"/>
</dbReference>
<dbReference type="GO" id="GO:0004844">
    <property type="term" value="F:uracil DNA N-glycosylase activity"/>
    <property type="evidence" value="ECO:0007669"/>
    <property type="project" value="TreeGrafter"/>
</dbReference>
<dbReference type="GO" id="GO:0006285">
    <property type="term" value="P:base-excision repair, AP site formation"/>
    <property type="evidence" value="ECO:0007669"/>
    <property type="project" value="UniProtKB-UniRule"/>
</dbReference>
<dbReference type="CDD" id="cd10028">
    <property type="entry name" value="UDG-F2_TDG_MUG"/>
    <property type="match status" value="1"/>
</dbReference>
<dbReference type="Gene3D" id="3.40.470.10">
    <property type="entry name" value="Uracil-DNA glycosylase-like domain"/>
    <property type="match status" value="1"/>
</dbReference>
<dbReference type="HAMAP" id="MF_01956">
    <property type="entry name" value="MUG"/>
    <property type="match status" value="1"/>
</dbReference>
<dbReference type="InterPro" id="IPR015637">
    <property type="entry name" value="MUG/TDG"/>
</dbReference>
<dbReference type="InterPro" id="IPR023502">
    <property type="entry name" value="MUG_bact"/>
</dbReference>
<dbReference type="InterPro" id="IPR005122">
    <property type="entry name" value="Uracil-DNA_glycosylase-like"/>
</dbReference>
<dbReference type="InterPro" id="IPR036895">
    <property type="entry name" value="Uracil-DNA_glycosylase-like_sf"/>
</dbReference>
<dbReference type="NCBIfam" id="NF007570">
    <property type="entry name" value="PRK10201.1"/>
    <property type="match status" value="1"/>
</dbReference>
<dbReference type="PANTHER" id="PTHR12159">
    <property type="entry name" value="G/T AND G/U MISMATCH-SPECIFIC DNA GLYCOSYLASE"/>
    <property type="match status" value="1"/>
</dbReference>
<dbReference type="PANTHER" id="PTHR12159:SF9">
    <property type="entry name" value="G_T MISMATCH-SPECIFIC THYMINE DNA GLYCOSYLASE"/>
    <property type="match status" value="1"/>
</dbReference>
<dbReference type="Pfam" id="PF03167">
    <property type="entry name" value="UDG"/>
    <property type="match status" value="1"/>
</dbReference>
<dbReference type="SMART" id="SM00986">
    <property type="entry name" value="UDG"/>
    <property type="match status" value="1"/>
</dbReference>
<dbReference type="SMART" id="SM00987">
    <property type="entry name" value="UreE_C"/>
    <property type="match status" value="1"/>
</dbReference>
<dbReference type="SUPFAM" id="SSF52141">
    <property type="entry name" value="Uracil-DNA glycosylase-like"/>
    <property type="match status" value="1"/>
</dbReference>
<proteinExistence type="inferred from homology"/>
<name>MUG_KLEP7</name>
<organism>
    <name type="scientific">Klebsiella pneumoniae subsp. pneumoniae (strain ATCC 700721 / MGH 78578)</name>
    <dbReference type="NCBI Taxonomy" id="272620"/>
    <lineage>
        <taxon>Bacteria</taxon>
        <taxon>Pseudomonadati</taxon>
        <taxon>Pseudomonadota</taxon>
        <taxon>Gammaproteobacteria</taxon>
        <taxon>Enterobacterales</taxon>
        <taxon>Enterobacteriaceae</taxon>
        <taxon>Klebsiella/Raoultella group</taxon>
        <taxon>Klebsiella</taxon>
        <taxon>Klebsiella pneumoniae complex</taxon>
    </lineage>
</organism>
<comment type="function">
    <text evidence="1">Excises ethenocytosine and uracil, which can arise by alkylation or deamination of cytosine, respectively, from the corresponding mispairs with guanine in ds-DNA. It is capable of hydrolyzing the carbon-nitrogen bond between the sugar-phosphate backbone of the DNA and the mispaired base. The complementary strand guanine functions in substrate recognition. Required for DNA damage lesion repair in stationary-phase cells.</text>
</comment>
<comment type="catalytic activity">
    <reaction evidence="1">
        <text>Specifically hydrolyzes mismatched double-stranded DNA and polynucleotides, releasing free uracil.</text>
        <dbReference type="EC" id="3.2.2.28"/>
    </reaction>
</comment>
<comment type="subunit">
    <text evidence="1">Binds DNA as a monomer.</text>
</comment>
<comment type="subcellular location">
    <subcellularLocation>
        <location evidence="1">Cytoplasm</location>
    </subcellularLocation>
</comment>
<comment type="similarity">
    <text evidence="1">Belongs to the uracil-DNA glycosylase (UDG) superfamily. TDG/mug family.</text>
</comment>
<sequence>MISDILAPGLRVVFCGINPGKSSAHTGFHFAHPGNRFWKVIHQAGFTDRQLRPEEELQLLDTRCGITMLVERPTVQASEVALQELRSGGRELVRKIEEYQPQALAVLGKQAFELAFNQRGAKWGKQAMTIGTTQVWVLPNPSGLNRATLDKLVAAYRELDDALATRGQ</sequence>
<accession>A6TE50</accession>